<proteinExistence type="evidence at transcript level"/>
<organism>
    <name type="scientific">Xenopus laevis</name>
    <name type="common">African clawed frog</name>
    <dbReference type="NCBI Taxonomy" id="8355"/>
    <lineage>
        <taxon>Eukaryota</taxon>
        <taxon>Metazoa</taxon>
        <taxon>Chordata</taxon>
        <taxon>Craniata</taxon>
        <taxon>Vertebrata</taxon>
        <taxon>Euteleostomi</taxon>
        <taxon>Amphibia</taxon>
        <taxon>Batrachia</taxon>
        <taxon>Anura</taxon>
        <taxon>Pipoidea</taxon>
        <taxon>Pipidae</taxon>
        <taxon>Xenopodinae</taxon>
        <taxon>Xenopus</taxon>
        <taxon>Xenopus</taxon>
    </lineage>
</organism>
<reference key="1">
    <citation type="submission" date="2003-08" db="EMBL/GenBank/DDBJ databases">
        <authorList>
            <consortium name="NIH - Xenopus Gene Collection (XGC) project"/>
        </authorList>
    </citation>
    <scope>NUCLEOTIDE SEQUENCE [LARGE SCALE MRNA]</scope>
    <source>
        <tissue>Embryo</tissue>
    </source>
</reference>
<name>OXND1_XENLA</name>
<sequence length="314" mass="34692">MALVAGSAAYQVLRGVTGTFPTQSATLLARAPALCAHTMNRRRMSSSQQTDHLERTANTFRQEIISPAKVCGITNESATVKRVRLAIANREFTFKAGQWVDFFIPGVPKVGGFSICSSPGLLETEGVLELAVKYNLHPPAHWIHSQCALGSEVAIRVGGEFCFDPQPSDLPLDLVLIAGGVGINPLFSILLHVADLHKTREITGRGFQMGNVKLYYCAKNTGELLFKRNILDLVNSFPGKVTCSFHVTQQSSPICRELQPFITEGRITEKDLASYVSTDQLCYICGPPPMIESMCKQLQSLHLPKERILFEKWW</sequence>
<gene>
    <name type="primary">oxnad1</name>
</gene>
<protein>
    <recommendedName>
        <fullName>Oxidoreductase NAD-binding domain-containing protein 1</fullName>
        <ecNumber>1.-.-.-</ecNumber>
    </recommendedName>
</protein>
<feature type="signal peptide" evidence="2">
    <location>
        <begin position="1"/>
        <end position="18"/>
    </location>
</feature>
<feature type="chain" id="PRO_0000299575" description="Oxidoreductase NAD-binding domain-containing protein 1">
    <location>
        <begin position="19"/>
        <end position="314"/>
    </location>
</feature>
<feature type="domain" description="FAD-binding FR-type" evidence="3">
    <location>
        <begin position="63"/>
        <end position="166"/>
    </location>
</feature>
<feature type="binding site" evidence="1">
    <location>
        <begin position="180"/>
        <end position="185"/>
    </location>
    <ligand>
        <name>NAD(+)</name>
        <dbReference type="ChEBI" id="CHEBI:57540"/>
    </ligand>
</feature>
<keyword id="KW-0520">NAD</keyword>
<keyword id="KW-0560">Oxidoreductase</keyword>
<keyword id="KW-1185">Reference proteome</keyword>
<keyword id="KW-0732">Signal</keyword>
<dbReference type="EC" id="1.-.-.-"/>
<dbReference type="EMBL" id="BC055995">
    <property type="protein sequence ID" value="AAH55995.1"/>
    <property type="molecule type" value="mRNA"/>
</dbReference>
<dbReference type="EMBL" id="BC106287">
    <property type="protein sequence ID" value="AAI06288.1"/>
    <property type="molecule type" value="mRNA"/>
</dbReference>
<dbReference type="RefSeq" id="NP_001079844.1">
    <property type="nucleotide sequence ID" value="NM_001086375.1"/>
</dbReference>
<dbReference type="SMR" id="Q7T0X7"/>
<dbReference type="DNASU" id="379534"/>
<dbReference type="GeneID" id="379534"/>
<dbReference type="KEGG" id="xla:379534"/>
<dbReference type="AGR" id="Xenbase:XB-GENE-971240"/>
<dbReference type="CTD" id="379534"/>
<dbReference type="Xenbase" id="XB-GENE-971240">
    <property type="gene designation" value="oxnad1.L"/>
</dbReference>
<dbReference type="OrthoDB" id="436496at2759"/>
<dbReference type="Proteomes" id="UP000186698">
    <property type="component" value="Chromosome 6L"/>
</dbReference>
<dbReference type="Bgee" id="379534">
    <property type="expression patterns" value="Expressed in oocyte and 20 other cell types or tissues"/>
</dbReference>
<dbReference type="GO" id="GO:0005739">
    <property type="term" value="C:mitochondrion"/>
    <property type="evidence" value="ECO:0007669"/>
    <property type="project" value="TreeGrafter"/>
</dbReference>
<dbReference type="GO" id="GO:0016491">
    <property type="term" value="F:oxidoreductase activity"/>
    <property type="evidence" value="ECO:0007669"/>
    <property type="project" value="UniProtKB-KW"/>
</dbReference>
<dbReference type="CDD" id="cd00322">
    <property type="entry name" value="FNR_like"/>
    <property type="match status" value="1"/>
</dbReference>
<dbReference type="Gene3D" id="3.40.50.80">
    <property type="entry name" value="Nucleotide-binding domain of ferredoxin-NADP reductase (FNR) module"/>
    <property type="match status" value="1"/>
</dbReference>
<dbReference type="Gene3D" id="2.40.30.10">
    <property type="entry name" value="Translation factors"/>
    <property type="match status" value="1"/>
</dbReference>
<dbReference type="InterPro" id="IPR017927">
    <property type="entry name" value="FAD-bd_FR_type"/>
</dbReference>
<dbReference type="InterPro" id="IPR039261">
    <property type="entry name" value="FNR_nucleotide-bd"/>
</dbReference>
<dbReference type="InterPro" id="IPR052128">
    <property type="entry name" value="Oxidoreductase_NAD-binding"/>
</dbReference>
<dbReference type="InterPro" id="IPR001433">
    <property type="entry name" value="OxRdtase_FAD/NAD-bd"/>
</dbReference>
<dbReference type="InterPro" id="IPR017938">
    <property type="entry name" value="Riboflavin_synthase-like_b-brl"/>
</dbReference>
<dbReference type="PANTHER" id="PTHR46505">
    <property type="entry name" value="OXIDOREDUCTASE NAD-BINDING DOMAIN-CONTAINING PROTEIN 1"/>
    <property type="match status" value="1"/>
</dbReference>
<dbReference type="PANTHER" id="PTHR46505:SF1">
    <property type="entry name" value="OXIDOREDUCTASE NAD-BINDING DOMAIN-CONTAINING PROTEIN 1"/>
    <property type="match status" value="1"/>
</dbReference>
<dbReference type="Pfam" id="PF00175">
    <property type="entry name" value="NAD_binding_1"/>
    <property type="match status" value="1"/>
</dbReference>
<dbReference type="PRINTS" id="PR00410">
    <property type="entry name" value="PHEHYDRXLASE"/>
</dbReference>
<dbReference type="SUPFAM" id="SSF52343">
    <property type="entry name" value="Ferredoxin reductase-like, C-terminal NADP-linked domain"/>
    <property type="match status" value="1"/>
</dbReference>
<dbReference type="SUPFAM" id="SSF63380">
    <property type="entry name" value="Riboflavin synthase domain-like"/>
    <property type="match status" value="1"/>
</dbReference>
<dbReference type="PROSITE" id="PS51384">
    <property type="entry name" value="FAD_FR"/>
    <property type="match status" value="1"/>
</dbReference>
<accession>Q7T0X7</accession>
<evidence type="ECO:0000250" key="1"/>
<evidence type="ECO:0000255" key="2"/>
<evidence type="ECO:0000255" key="3">
    <source>
        <dbReference type="PROSITE-ProRule" id="PRU00716"/>
    </source>
</evidence>